<evidence type="ECO:0000250" key="1"/>
<evidence type="ECO:0000250" key="2">
    <source>
        <dbReference type="UniProtKB" id="P19660"/>
    </source>
</evidence>
<evidence type="ECO:0000255" key="3"/>
<evidence type="ECO:0000256" key="4">
    <source>
        <dbReference type="SAM" id="MobiDB-lite"/>
    </source>
</evidence>
<evidence type="ECO:0000305" key="5"/>
<feature type="signal peptide" evidence="3">
    <location>
        <begin position="1"/>
        <end position="29"/>
    </location>
</feature>
<feature type="propeptide" id="PRO_0000004706" evidence="1">
    <location>
        <begin position="30"/>
        <end position="130"/>
    </location>
</feature>
<feature type="peptide" id="PRO_0000004707" description="Cathelicidin-2">
    <location>
        <begin position="131"/>
        <end position="173"/>
    </location>
</feature>
<feature type="propeptide" id="PRO_0000004708" description="Removed in mature form" evidence="1">
    <location>
        <begin position="174"/>
        <end position="176"/>
    </location>
</feature>
<feature type="region of interest" description="Disordered" evidence="4">
    <location>
        <begin position="135"/>
        <end position="176"/>
    </location>
</feature>
<feature type="compositionally biased region" description="Pro residues" evidence="4">
    <location>
        <begin position="141"/>
        <end position="176"/>
    </location>
</feature>
<feature type="modified residue" description="Pyrrolidone carboxylic acid" evidence="2">
    <location>
        <position position="30"/>
    </location>
</feature>
<feature type="modified residue" description="Proline amide" evidence="1">
    <location>
        <position position="173"/>
    </location>
</feature>
<feature type="disulfide bond" evidence="1">
    <location>
        <begin position="85"/>
        <end position="96"/>
    </location>
</feature>
<feature type="disulfide bond" evidence="1">
    <location>
        <begin position="107"/>
        <end position="124"/>
    </location>
</feature>
<feature type="sequence conflict" description="In Ref. 1; AAB49716." evidence="5" ref="1">
    <original>T</original>
    <variation>R</variation>
    <location>
        <position position="79"/>
    </location>
</feature>
<keyword id="KW-0027">Amidation</keyword>
<keyword id="KW-0044">Antibiotic</keyword>
<keyword id="KW-0929">Antimicrobial</keyword>
<keyword id="KW-1015">Disulfide bond</keyword>
<keyword id="KW-0873">Pyrrolidone carboxylic acid</keyword>
<keyword id="KW-1185">Reference proteome</keyword>
<keyword id="KW-0677">Repeat</keyword>
<keyword id="KW-0964">Secreted</keyword>
<keyword id="KW-0732">Signal</keyword>
<protein>
    <recommendedName>
        <fullName>Cathelicidin-2</fullName>
    </recommendedName>
    <alternativeName>
        <fullName>Bactenecin-5</fullName>
        <shortName>Bac5</shortName>
    </alternativeName>
    <alternativeName>
        <fullName>OaBac5</fullName>
    </alternativeName>
</protein>
<gene>
    <name type="primary">CATHL2</name>
    <name type="synonym">BAC5</name>
</gene>
<organism>
    <name type="scientific">Ovis aries</name>
    <name type="common">Sheep</name>
    <dbReference type="NCBI Taxonomy" id="9940"/>
    <lineage>
        <taxon>Eukaryota</taxon>
        <taxon>Metazoa</taxon>
        <taxon>Chordata</taxon>
        <taxon>Craniata</taxon>
        <taxon>Vertebrata</taxon>
        <taxon>Euteleostomi</taxon>
        <taxon>Mammalia</taxon>
        <taxon>Eutheria</taxon>
        <taxon>Laurasiatheria</taxon>
        <taxon>Artiodactyla</taxon>
        <taxon>Ruminantia</taxon>
        <taxon>Pecora</taxon>
        <taxon>Bovidae</taxon>
        <taxon>Caprinae</taxon>
        <taxon>Ovis</taxon>
    </lineage>
</organism>
<proteinExistence type="evidence at transcript level"/>
<name>CTHL2_SHEEP</name>
<dbReference type="EMBL" id="U60599">
    <property type="protein sequence ID" value="AAB49714.1"/>
    <property type="molecule type" value="Genomic_DNA"/>
</dbReference>
<dbReference type="EMBL" id="U60601">
    <property type="protein sequence ID" value="AAB49716.1"/>
    <property type="molecule type" value="mRNA"/>
</dbReference>
<dbReference type="RefSeq" id="NP_001009787.1">
    <property type="nucleotide sequence ID" value="NM_001009787.1"/>
</dbReference>
<dbReference type="SMR" id="P79362"/>
<dbReference type="STRING" id="9940.ENSOARP00000002071"/>
<dbReference type="TCDB" id="1.C.33.1.3">
    <property type="family name" value="the cathelicidin (cathelicidin) family"/>
</dbReference>
<dbReference type="PaxDb" id="9940-ENSOARP00000002071"/>
<dbReference type="GeneID" id="443356"/>
<dbReference type="KEGG" id="oas:443356"/>
<dbReference type="CTD" id="443356"/>
<dbReference type="eggNOG" id="ENOG502SAES">
    <property type="taxonomic scope" value="Eukaryota"/>
</dbReference>
<dbReference type="OrthoDB" id="9930485at2759"/>
<dbReference type="Proteomes" id="UP000002356">
    <property type="component" value="Unplaced"/>
</dbReference>
<dbReference type="GO" id="GO:0005615">
    <property type="term" value="C:extracellular space"/>
    <property type="evidence" value="ECO:0007669"/>
    <property type="project" value="TreeGrafter"/>
</dbReference>
<dbReference type="GO" id="GO:0001530">
    <property type="term" value="F:lipopolysaccharide binding"/>
    <property type="evidence" value="ECO:0007669"/>
    <property type="project" value="TreeGrafter"/>
</dbReference>
<dbReference type="GO" id="GO:0061844">
    <property type="term" value="P:antimicrobial humoral immune response mediated by antimicrobial peptide"/>
    <property type="evidence" value="ECO:0007669"/>
    <property type="project" value="TreeGrafter"/>
</dbReference>
<dbReference type="GO" id="GO:0050829">
    <property type="term" value="P:defense response to Gram-negative bacterium"/>
    <property type="evidence" value="ECO:0007669"/>
    <property type="project" value="TreeGrafter"/>
</dbReference>
<dbReference type="GO" id="GO:0050830">
    <property type="term" value="P:defense response to Gram-positive bacterium"/>
    <property type="evidence" value="ECO:0007669"/>
    <property type="project" value="TreeGrafter"/>
</dbReference>
<dbReference type="GO" id="GO:0045087">
    <property type="term" value="P:innate immune response"/>
    <property type="evidence" value="ECO:0007669"/>
    <property type="project" value="TreeGrafter"/>
</dbReference>
<dbReference type="FunFam" id="3.10.450.10:FF:000003">
    <property type="entry name" value="Cathelicidin antimicrobial peptide"/>
    <property type="match status" value="1"/>
</dbReference>
<dbReference type="Gene3D" id="3.10.450.10">
    <property type="match status" value="1"/>
</dbReference>
<dbReference type="InterPro" id="IPR001894">
    <property type="entry name" value="Cathelicidin-like"/>
</dbReference>
<dbReference type="InterPro" id="IPR018216">
    <property type="entry name" value="Cathelicidin_CS"/>
</dbReference>
<dbReference type="InterPro" id="IPR046350">
    <property type="entry name" value="Cystatin_sf"/>
</dbReference>
<dbReference type="PANTHER" id="PTHR10206">
    <property type="entry name" value="CATHELICIDIN"/>
    <property type="match status" value="1"/>
</dbReference>
<dbReference type="PANTHER" id="PTHR10206:SF2">
    <property type="entry name" value="CATHELICIDIN ANTIMICROBIAL PEPTIDE"/>
    <property type="match status" value="1"/>
</dbReference>
<dbReference type="Pfam" id="PF00666">
    <property type="entry name" value="Cathelicidins"/>
    <property type="match status" value="1"/>
</dbReference>
<dbReference type="SUPFAM" id="SSF54403">
    <property type="entry name" value="Cystatin/monellin"/>
    <property type="match status" value="1"/>
</dbReference>
<dbReference type="PROSITE" id="PS00946">
    <property type="entry name" value="CATHELICIDINS_1"/>
    <property type="match status" value="1"/>
</dbReference>
<dbReference type="PROSITE" id="PS00947">
    <property type="entry name" value="CATHELICIDINS_2"/>
    <property type="match status" value="1"/>
</dbReference>
<reference key="1">
    <citation type="journal article" date="1998" name="Gene">
        <title>Localization and genomic organization of sheep antimicrobial peptides genes.</title>
        <authorList>
            <person name="Huttner K.M."/>
            <person name="Lambeth M.R."/>
            <person name="Burkin H.R."/>
            <person name="Broad T.E."/>
        </authorList>
    </citation>
    <scope>NUCLEOTIDE SEQUENCE [GENOMIC DNA / MRNA]</scope>
    <source>
        <tissue>Liver</tissue>
    </source>
</reference>
<sequence length="176" mass="19842">METQGASLSLGRWSLWLLLLGLVLPSASAQALSYREAVLRAVGQLNERSSEANLYRLLELDPAPNDEVDPGTRKPVSFTVKETVCPRTTQQPPEECDFKENGLVKQCVGTVTLDPSNDQFDINCNELQSVRFRPPIRRPPIRPPFRPPFRPPVRPPIRPPFRPPFRPPIGPFPGRR</sequence>
<comment type="function">
    <text evidence="1">Binds to the lipid A moiety of bacterial lipipolysaccharides (LPS), a glycolipid present in the outer membrane of all Gram-negative bacteria. Potent antimicrobial activity (By similarity).</text>
</comment>
<comment type="subcellular location">
    <subcellularLocation>
        <location>Secreted</location>
    </subcellularLocation>
</comment>
<comment type="domain">
    <text>BAC5 sequence consists almost exclusively of X-P-P-Y repeats.</text>
</comment>
<comment type="PTM">
    <text evidence="1">Elastase is responsible for its maturation.</text>
</comment>
<comment type="similarity">
    <text evidence="5">Belongs to the cathelicidin family.</text>
</comment>
<accession>P79362</accession>
<accession>P79363</accession>